<accession>Q9X8N8</accession>
<protein>
    <recommendedName>
        <fullName evidence="1">L-aspartate oxidase</fullName>
        <shortName evidence="1">LASPO</shortName>
        <ecNumber evidence="1">1.4.3.16</ecNumber>
    </recommendedName>
    <alternativeName>
        <fullName>Quinolinate synthase B</fullName>
    </alternativeName>
</protein>
<sequence>MTSTGIRLHAPAPGWAIAADVVVVGSGVAGLTAALRCESAGLRTVVVTKARLDDGSTRWAQGGVAAALGEGDTPEQHLDDTLVAGAGLCDQDAVRILVTEGPDAVRRLIATGAHFDESTEGGLALTREGGHHRRRIAHAGGDATGAEISRALVEAVRARGLRTVENALVLDLLTDAEGRTAGVTLHVMGEGQHDGVGAVHAPAVVLATGGMGQVFSATTNPSVSTGDGVALALRAGAEVSDLEFVQFHPTVLFLGSDAEGQQPLVSEAVRGEGAHLVDADGVRFMQGRHELAELAPRDIVAKAITRRMQEHGADHMYLDARHFGRTMWEHRFPTILAACRAHGIDPVTEPVPVAPAAHYASGGVRTDAHGRTTVPGLYACGEVACTGVHGANRLASNSLLEGLVYAERIAADIAAAHTAGTLHARVPAPLPHPDHSQHPRHPLLPPEARLTIQRIMTEGAGVLRSADSLARAADRLHGLHAEAREALHEHGKTSEPGVDTWEATNLLCVARVLVAAAARREETRGCHWREDHADRDDTTWRRHVVVRLNPDRTLAVHTTDTPEFPPTVHGAQPTHRPQEQ</sequence>
<keyword id="KW-0963">Cytoplasm</keyword>
<keyword id="KW-0274">FAD</keyword>
<keyword id="KW-0285">Flavoprotein</keyword>
<keyword id="KW-0547">Nucleotide-binding</keyword>
<keyword id="KW-0560">Oxidoreductase</keyword>
<keyword id="KW-0662">Pyridine nucleotide biosynthesis</keyword>
<keyword id="KW-1185">Reference proteome</keyword>
<gene>
    <name type="primary">nadB</name>
    <name type="ordered locus">SCO3382</name>
    <name type="ORF">SCE94.33c</name>
</gene>
<dbReference type="EC" id="1.4.3.16" evidence="1"/>
<dbReference type="EMBL" id="AL939116">
    <property type="protein sequence ID" value="CAB40882.1"/>
    <property type="molecule type" value="Genomic_DNA"/>
</dbReference>
<dbReference type="PIR" id="T36393">
    <property type="entry name" value="T36393"/>
</dbReference>
<dbReference type="RefSeq" id="NP_627590.1">
    <property type="nucleotide sequence ID" value="NC_003888.3"/>
</dbReference>
<dbReference type="RefSeq" id="WP_011028946.1">
    <property type="nucleotide sequence ID" value="NZ_VNID01000023.1"/>
</dbReference>
<dbReference type="SMR" id="Q9X8N8"/>
<dbReference type="FunCoup" id="Q9X8N8">
    <property type="interactions" value="125"/>
</dbReference>
<dbReference type="STRING" id="100226.gene:17761004"/>
<dbReference type="PaxDb" id="100226-SCO3382"/>
<dbReference type="KEGG" id="sco:SCO3382"/>
<dbReference type="PATRIC" id="fig|100226.15.peg.3445"/>
<dbReference type="eggNOG" id="COG0029">
    <property type="taxonomic scope" value="Bacteria"/>
</dbReference>
<dbReference type="HOGENOM" id="CLU_014312_3_2_11"/>
<dbReference type="InParanoid" id="Q9X8N8"/>
<dbReference type="OrthoDB" id="9805351at2"/>
<dbReference type="PhylomeDB" id="Q9X8N8"/>
<dbReference type="UniPathway" id="UPA00253">
    <property type="reaction ID" value="UER00326"/>
</dbReference>
<dbReference type="Proteomes" id="UP000001973">
    <property type="component" value="Chromosome"/>
</dbReference>
<dbReference type="GO" id="GO:0005737">
    <property type="term" value="C:cytoplasm"/>
    <property type="evidence" value="ECO:0007669"/>
    <property type="project" value="UniProtKB-SubCell"/>
</dbReference>
<dbReference type="GO" id="GO:0008734">
    <property type="term" value="F:L-aspartate oxidase activity"/>
    <property type="evidence" value="ECO:0000318"/>
    <property type="project" value="GO_Central"/>
</dbReference>
<dbReference type="GO" id="GO:0000166">
    <property type="term" value="F:nucleotide binding"/>
    <property type="evidence" value="ECO:0007669"/>
    <property type="project" value="UniProtKB-KW"/>
</dbReference>
<dbReference type="GO" id="GO:0033765">
    <property type="term" value="F:steroid dehydrogenase activity, acting on the CH-CH group of donors"/>
    <property type="evidence" value="ECO:0007669"/>
    <property type="project" value="UniProtKB-ARBA"/>
</dbReference>
<dbReference type="GO" id="GO:0034628">
    <property type="term" value="P:'de novo' NAD biosynthetic process from L-aspartate"/>
    <property type="evidence" value="ECO:0000318"/>
    <property type="project" value="GO_Central"/>
</dbReference>
<dbReference type="FunFam" id="3.50.50.60:FF:000038">
    <property type="entry name" value="L-aspartate oxidase"/>
    <property type="match status" value="1"/>
</dbReference>
<dbReference type="FunFam" id="3.90.700.10:FF:000002">
    <property type="entry name" value="L-aspartate oxidase"/>
    <property type="match status" value="1"/>
</dbReference>
<dbReference type="Gene3D" id="3.50.50.60">
    <property type="entry name" value="FAD/NAD(P)-binding domain"/>
    <property type="match status" value="1"/>
</dbReference>
<dbReference type="Gene3D" id="1.20.58.100">
    <property type="entry name" value="Fumarate reductase/succinate dehydrogenase flavoprotein-like, C-terminal domain"/>
    <property type="match status" value="1"/>
</dbReference>
<dbReference type="Gene3D" id="3.90.700.10">
    <property type="entry name" value="Succinate dehydrogenase/fumarate reductase flavoprotein, catalytic domain"/>
    <property type="match status" value="1"/>
</dbReference>
<dbReference type="InterPro" id="IPR003953">
    <property type="entry name" value="FAD-dep_OxRdtase_2_FAD-bd"/>
</dbReference>
<dbReference type="InterPro" id="IPR036188">
    <property type="entry name" value="FAD/NAD-bd_sf"/>
</dbReference>
<dbReference type="InterPro" id="IPR037099">
    <property type="entry name" value="Fum_R/Succ_DH_flav-like_C_sf"/>
</dbReference>
<dbReference type="InterPro" id="IPR015939">
    <property type="entry name" value="Fum_Rdtase/Succ_DH_flav-like_C"/>
</dbReference>
<dbReference type="InterPro" id="IPR005288">
    <property type="entry name" value="NadB"/>
</dbReference>
<dbReference type="InterPro" id="IPR027477">
    <property type="entry name" value="Succ_DH/fumarate_Rdtase_cat_sf"/>
</dbReference>
<dbReference type="NCBIfam" id="TIGR00551">
    <property type="entry name" value="nadB"/>
    <property type="match status" value="1"/>
</dbReference>
<dbReference type="NCBIfam" id="NF005867">
    <property type="entry name" value="PRK07804.1"/>
    <property type="match status" value="1"/>
</dbReference>
<dbReference type="PANTHER" id="PTHR42716">
    <property type="entry name" value="L-ASPARTATE OXIDASE"/>
    <property type="match status" value="1"/>
</dbReference>
<dbReference type="PANTHER" id="PTHR42716:SF2">
    <property type="entry name" value="L-ASPARTATE OXIDASE, CHLOROPLASTIC"/>
    <property type="match status" value="1"/>
</dbReference>
<dbReference type="Pfam" id="PF00890">
    <property type="entry name" value="FAD_binding_2"/>
    <property type="match status" value="1"/>
</dbReference>
<dbReference type="Pfam" id="PF02910">
    <property type="entry name" value="Succ_DH_flav_C"/>
    <property type="match status" value="1"/>
</dbReference>
<dbReference type="PIRSF" id="PIRSF000171">
    <property type="entry name" value="SDHA_APRA_LASPO"/>
    <property type="match status" value="1"/>
</dbReference>
<dbReference type="PRINTS" id="PR00368">
    <property type="entry name" value="FADPNR"/>
</dbReference>
<dbReference type="PRINTS" id="PR00411">
    <property type="entry name" value="PNDRDTASEI"/>
</dbReference>
<dbReference type="SUPFAM" id="SSF51905">
    <property type="entry name" value="FAD/NAD(P)-binding domain"/>
    <property type="match status" value="1"/>
</dbReference>
<dbReference type="SUPFAM" id="SSF46977">
    <property type="entry name" value="Succinate dehydrogenase/fumarate reductase flavoprotein C-terminal domain"/>
    <property type="match status" value="1"/>
</dbReference>
<dbReference type="SUPFAM" id="SSF56425">
    <property type="entry name" value="Succinate dehydrogenase/fumarate reductase flavoprotein, catalytic domain"/>
    <property type="match status" value="1"/>
</dbReference>
<feature type="chain" id="PRO_0000184401" description="L-aspartate oxidase">
    <location>
        <begin position="1"/>
        <end position="580"/>
    </location>
</feature>
<feature type="region of interest" description="Disordered" evidence="2">
    <location>
        <begin position="556"/>
        <end position="580"/>
    </location>
</feature>
<feature type="active site" description="Proton donor/acceptor" evidence="1">
    <location>
        <position position="297"/>
    </location>
</feature>
<feature type="binding site" evidence="1">
    <location>
        <begin position="26"/>
        <end position="29"/>
    </location>
    <ligand>
        <name>FAD</name>
        <dbReference type="ChEBI" id="CHEBI:57692"/>
    </ligand>
</feature>
<feature type="binding site" evidence="1">
    <location>
        <position position="49"/>
    </location>
    <ligand>
        <name>FAD</name>
        <dbReference type="ChEBI" id="CHEBI:57692"/>
    </ligand>
</feature>
<feature type="binding site" evidence="1">
    <location>
        <begin position="56"/>
        <end position="63"/>
    </location>
    <ligand>
        <name>FAD</name>
        <dbReference type="ChEBI" id="CHEBI:57692"/>
    </ligand>
</feature>
<feature type="binding site" evidence="1">
    <location>
        <position position="227"/>
    </location>
    <ligand>
        <name>FAD</name>
        <dbReference type="ChEBI" id="CHEBI:57692"/>
    </ligand>
</feature>
<feature type="binding site" evidence="1">
    <location>
        <position position="382"/>
    </location>
    <ligand>
        <name>FAD</name>
        <dbReference type="ChEBI" id="CHEBI:57692"/>
    </ligand>
</feature>
<feature type="binding site" evidence="1">
    <location>
        <begin position="398"/>
        <end position="399"/>
    </location>
    <ligand>
        <name>FAD</name>
        <dbReference type="ChEBI" id="CHEBI:57692"/>
    </ligand>
</feature>
<feature type="site" description="Important in orienting the L-aspartate substrate" evidence="1">
    <location>
        <position position="128"/>
    </location>
</feature>
<evidence type="ECO:0000250" key="1">
    <source>
        <dbReference type="UniProtKB" id="P10902"/>
    </source>
</evidence>
<evidence type="ECO:0000256" key="2">
    <source>
        <dbReference type="SAM" id="MobiDB-lite"/>
    </source>
</evidence>
<evidence type="ECO:0000305" key="3"/>
<comment type="function">
    <text evidence="1">Catalyzes the oxidation of L-aspartate to iminoaspartate, the first step in the de novo biosynthesis of NAD(+).</text>
</comment>
<comment type="catalytic activity">
    <reaction evidence="1">
        <text>L-aspartate + O2 = iminosuccinate + H2O2</text>
        <dbReference type="Rhea" id="RHEA:25876"/>
        <dbReference type="ChEBI" id="CHEBI:15379"/>
        <dbReference type="ChEBI" id="CHEBI:16240"/>
        <dbReference type="ChEBI" id="CHEBI:29991"/>
        <dbReference type="ChEBI" id="CHEBI:77875"/>
        <dbReference type="EC" id="1.4.3.16"/>
    </reaction>
    <physiologicalReaction direction="left-to-right" evidence="1">
        <dbReference type="Rhea" id="RHEA:25877"/>
    </physiologicalReaction>
</comment>
<comment type="cofactor">
    <cofactor evidence="1">
        <name>FAD</name>
        <dbReference type="ChEBI" id="CHEBI:57692"/>
    </cofactor>
    <text evidence="1">Binds 1 FAD per subunit.</text>
</comment>
<comment type="pathway">
    <text evidence="1">Cofactor biosynthesis; NAD(+) biosynthesis; iminoaspartate from L-aspartate (oxidase route): step 1/1.</text>
</comment>
<comment type="subcellular location">
    <subcellularLocation>
        <location evidence="1">Cytoplasm</location>
    </subcellularLocation>
</comment>
<comment type="similarity">
    <text evidence="3">Belongs to the FAD-dependent oxidoreductase 2 family. NadB subfamily.</text>
</comment>
<reference key="1">
    <citation type="journal article" date="2002" name="Nature">
        <title>Complete genome sequence of the model actinomycete Streptomyces coelicolor A3(2).</title>
        <authorList>
            <person name="Bentley S.D."/>
            <person name="Chater K.F."/>
            <person name="Cerdeno-Tarraga A.-M."/>
            <person name="Challis G.L."/>
            <person name="Thomson N.R."/>
            <person name="James K.D."/>
            <person name="Harris D.E."/>
            <person name="Quail M.A."/>
            <person name="Kieser H."/>
            <person name="Harper D."/>
            <person name="Bateman A."/>
            <person name="Brown S."/>
            <person name="Chandra G."/>
            <person name="Chen C.W."/>
            <person name="Collins M."/>
            <person name="Cronin A."/>
            <person name="Fraser A."/>
            <person name="Goble A."/>
            <person name="Hidalgo J."/>
            <person name="Hornsby T."/>
            <person name="Howarth S."/>
            <person name="Huang C.-H."/>
            <person name="Kieser T."/>
            <person name="Larke L."/>
            <person name="Murphy L.D."/>
            <person name="Oliver K."/>
            <person name="O'Neil S."/>
            <person name="Rabbinowitsch E."/>
            <person name="Rajandream M.A."/>
            <person name="Rutherford K.M."/>
            <person name="Rutter S."/>
            <person name="Seeger K."/>
            <person name="Saunders D."/>
            <person name="Sharp S."/>
            <person name="Squares R."/>
            <person name="Squares S."/>
            <person name="Taylor K."/>
            <person name="Warren T."/>
            <person name="Wietzorrek A."/>
            <person name="Woodward J.R."/>
            <person name="Barrell B.G."/>
            <person name="Parkhill J."/>
            <person name="Hopwood D.A."/>
        </authorList>
    </citation>
    <scope>NUCLEOTIDE SEQUENCE [LARGE SCALE GENOMIC DNA]</scope>
    <source>
        <strain>ATCC BAA-471 / A3(2) / M145</strain>
    </source>
</reference>
<organism>
    <name type="scientific">Streptomyces coelicolor (strain ATCC BAA-471 / A3(2) / M145)</name>
    <dbReference type="NCBI Taxonomy" id="100226"/>
    <lineage>
        <taxon>Bacteria</taxon>
        <taxon>Bacillati</taxon>
        <taxon>Actinomycetota</taxon>
        <taxon>Actinomycetes</taxon>
        <taxon>Kitasatosporales</taxon>
        <taxon>Streptomycetaceae</taxon>
        <taxon>Streptomyces</taxon>
        <taxon>Streptomyces albidoflavus group</taxon>
    </lineage>
</organism>
<name>NADB_STRCO</name>
<proteinExistence type="inferred from homology"/>